<keyword id="KW-0678">Repressor</keyword>
<keyword id="KW-0687">Ribonucleoprotein</keyword>
<keyword id="KW-0689">Ribosomal protein</keyword>
<keyword id="KW-0694">RNA-binding</keyword>
<keyword id="KW-0699">rRNA-binding</keyword>
<keyword id="KW-0810">Translation regulation</keyword>
<keyword id="KW-0820">tRNA-binding</keyword>
<accession>A1T4H1</accession>
<feature type="chain" id="PRO_0000308057" description="Large ribosomal subunit protein uL1">
    <location>
        <begin position="1"/>
        <end position="235"/>
    </location>
</feature>
<proteinExistence type="inferred from homology"/>
<reference key="1">
    <citation type="submission" date="2006-12" db="EMBL/GenBank/DDBJ databases">
        <title>Complete sequence of Mycobacterium vanbaalenii PYR-1.</title>
        <authorList>
            <consortium name="US DOE Joint Genome Institute"/>
            <person name="Copeland A."/>
            <person name="Lucas S."/>
            <person name="Lapidus A."/>
            <person name="Barry K."/>
            <person name="Detter J.C."/>
            <person name="Glavina del Rio T."/>
            <person name="Hammon N."/>
            <person name="Israni S."/>
            <person name="Dalin E."/>
            <person name="Tice H."/>
            <person name="Pitluck S."/>
            <person name="Singan V."/>
            <person name="Schmutz J."/>
            <person name="Larimer F."/>
            <person name="Land M."/>
            <person name="Hauser L."/>
            <person name="Kyrpides N."/>
            <person name="Anderson I.J."/>
            <person name="Miller C."/>
            <person name="Richardson P."/>
        </authorList>
    </citation>
    <scope>NUCLEOTIDE SEQUENCE [LARGE SCALE GENOMIC DNA]</scope>
    <source>
        <strain>DSM 7251 / JCM 13017 / BCRC 16820 / KCTC 9966 / NRRL B-24157 / PYR-1</strain>
    </source>
</reference>
<sequence length="235" mass="24980">MSKNSKAYKEAAEKVDKTRLYSPLEAAKLAKETSSKKQDATVEVAIRLGVDPRKADQMVRGTVNLPHGTGKTARVAVFAVGDKAEQAEAAGADIVGSDDLIEKIQGGFLDFDAAIATPDQMAKVGRIARILGPRGLMPNPKTGTVTPDVAKAVSDIKGGKINFRVDKQANLHFVIGKASFDESKLAENYGAALDEVLRAKPSSSKGRYLKKVVVSTTTGPGIPVDPSITRNFTEE</sequence>
<evidence type="ECO:0000255" key="1">
    <source>
        <dbReference type="HAMAP-Rule" id="MF_01318"/>
    </source>
</evidence>
<evidence type="ECO:0000305" key="2"/>
<organism>
    <name type="scientific">Mycolicibacterium vanbaalenii (strain DSM 7251 / JCM 13017 / BCRC 16820 / KCTC 9966 / NRRL B-24157 / PYR-1)</name>
    <name type="common">Mycobacterium vanbaalenii</name>
    <dbReference type="NCBI Taxonomy" id="350058"/>
    <lineage>
        <taxon>Bacteria</taxon>
        <taxon>Bacillati</taxon>
        <taxon>Actinomycetota</taxon>
        <taxon>Actinomycetes</taxon>
        <taxon>Mycobacteriales</taxon>
        <taxon>Mycobacteriaceae</taxon>
        <taxon>Mycolicibacterium</taxon>
    </lineage>
</organism>
<gene>
    <name evidence="1" type="primary">rplA</name>
    <name type="ordered locus">Mvan_1236</name>
</gene>
<protein>
    <recommendedName>
        <fullName evidence="1">Large ribosomal subunit protein uL1</fullName>
    </recommendedName>
    <alternativeName>
        <fullName evidence="2">50S ribosomal protein L1</fullName>
    </alternativeName>
</protein>
<name>RL1_MYCVP</name>
<dbReference type="EMBL" id="CP000511">
    <property type="protein sequence ID" value="ABM12071.1"/>
    <property type="molecule type" value="Genomic_DNA"/>
</dbReference>
<dbReference type="RefSeq" id="WP_011778504.1">
    <property type="nucleotide sequence ID" value="NZ_JACKSD010000315.1"/>
</dbReference>
<dbReference type="SMR" id="A1T4H1"/>
<dbReference type="STRING" id="350058.Mvan_1236"/>
<dbReference type="KEGG" id="mva:Mvan_1236"/>
<dbReference type="eggNOG" id="COG0081">
    <property type="taxonomic scope" value="Bacteria"/>
</dbReference>
<dbReference type="HOGENOM" id="CLU_062853_0_0_11"/>
<dbReference type="Proteomes" id="UP000009159">
    <property type="component" value="Chromosome"/>
</dbReference>
<dbReference type="GO" id="GO:0015934">
    <property type="term" value="C:large ribosomal subunit"/>
    <property type="evidence" value="ECO:0007669"/>
    <property type="project" value="InterPro"/>
</dbReference>
<dbReference type="GO" id="GO:0019843">
    <property type="term" value="F:rRNA binding"/>
    <property type="evidence" value="ECO:0007669"/>
    <property type="project" value="UniProtKB-UniRule"/>
</dbReference>
<dbReference type="GO" id="GO:0003735">
    <property type="term" value="F:structural constituent of ribosome"/>
    <property type="evidence" value="ECO:0007669"/>
    <property type="project" value="InterPro"/>
</dbReference>
<dbReference type="GO" id="GO:0000049">
    <property type="term" value="F:tRNA binding"/>
    <property type="evidence" value="ECO:0007669"/>
    <property type="project" value="UniProtKB-KW"/>
</dbReference>
<dbReference type="GO" id="GO:0006417">
    <property type="term" value="P:regulation of translation"/>
    <property type="evidence" value="ECO:0007669"/>
    <property type="project" value="UniProtKB-KW"/>
</dbReference>
<dbReference type="GO" id="GO:0006412">
    <property type="term" value="P:translation"/>
    <property type="evidence" value="ECO:0007669"/>
    <property type="project" value="UniProtKB-UniRule"/>
</dbReference>
<dbReference type="CDD" id="cd00403">
    <property type="entry name" value="Ribosomal_L1"/>
    <property type="match status" value="1"/>
</dbReference>
<dbReference type="FunFam" id="3.40.50.790:FF:000001">
    <property type="entry name" value="50S ribosomal protein L1"/>
    <property type="match status" value="1"/>
</dbReference>
<dbReference type="Gene3D" id="3.30.190.20">
    <property type="match status" value="1"/>
</dbReference>
<dbReference type="Gene3D" id="3.40.50.790">
    <property type="match status" value="1"/>
</dbReference>
<dbReference type="HAMAP" id="MF_01318_B">
    <property type="entry name" value="Ribosomal_uL1_B"/>
    <property type="match status" value="1"/>
</dbReference>
<dbReference type="InterPro" id="IPR005878">
    <property type="entry name" value="Ribosom_uL1_bac-type"/>
</dbReference>
<dbReference type="InterPro" id="IPR002143">
    <property type="entry name" value="Ribosomal_uL1"/>
</dbReference>
<dbReference type="InterPro" id="IPR023674">
    <property type="entry name" value="Ribosomal_uL1-like"/>
</dbReference>
<dbReference type="InterPro" id="IPR028364">
    <property type="entry name" value="Ribosomal_uL1/biogenesis"/>
</dbReference>
<dbReference type="InterPro" id="IPR016095">
    <property type="entry name" value="Ribosomal_uL1_3-a/b-sand"/>
</dbReference>
<dbReference type="InterPro" id="IPR023673">
    <property type="entry name" value="Ribosomal_uL1_CS"/>
</dbReference>
<dbReference type="NCBIfam" id="TIGR01169">
    <property type="entry name" value="rplA_bact"/>
    <property type="match status" value="1"/>
</dbReference>
<dbReference type="PANTHER" id="PTHR36427">
    <property type="entry name" value="54S RIBOSOMAL PROTEIN L1, MITOCHONDRIAL"/>
    <property type="match status" value="1"/>
</dbReference>
<dbReference type="PANTHER" id="PTHR36427:SF3">
    <property type="entry name" value="LARGE RIBOSOMAL SUBUNIT PROTEIN UL1M"/>
    <property type="match status" value="1"/>
</dbReference>
<dbReference type="Pfam" id="PF00687">
    <property type="entry name" value="Ribosomal_L1"/>
    <property type="match status" value="1"/>
</dbReference>
<dbReference type="PIRSF" id="PIRSF002155">
    <property type="entry name" value="Ribosomal_L1"/>
    <property type="match status" value="1"/>
</dbReference>
<dbReference type="SUPFAM" id="SSF56808">
    <property type="entry name" value="Ribosomal protein L1"/>
    <property type="match status" value="1"/>
</dbReference>
<dbReference type="PROSITE" id="PS01199">
    <property type="entry name" value="RIBOSOMAL_L1"/>
    <property type="match status" value="1"/>
</dbReference>
<comment type="function">
    <text evidence="1">Binds directly to 23S rRNA. The L1 stalk is quite mobile in the ribosome, and is involved in E site tRNA release.</text>
</comment>
<comment type="function">
    <text evidence="1">Protein L1 is also a translational repressor protein, it controls the translation of the L11 operon by binding to its mRNA.</text>
</comment>
<comment type="subunit">
    <text evidence="1">Part of the 50S ribosomal subunit.</text>
</comment>
<comment type="similarity">
    <text evidence="1">Belongs to the universal ribosomal protein uL1 family.</text>
</comment>